<gene>
    <name type="ordered locus">YER156C</name>
</gene>
<protein>
    <recommendedName>
        <fullName>MYG1 protein YER156C</fullName>
    </recommendedName>
</protein>
<keyword id="KW-1185">Reference proteome</keyword>
<reference key="1">
    <citation type="journal article" date="1997" name="Nature">
        <title>The nucleotide sequence of Saccharomyces cerevisiae chromosome V.</title>
        <authorList>
            <person name="Dietrich F.S."/>
            <person name="Mulligan J.T."/>
            <person name="Hennessy K.M."/>
            <person name="Yelton M.A."/>
            <person name="Allen E."/>
            <person name="Araujo R."/>
            <person name="Aviles E."/>
            <person name="Berno A."/>
            <person name="Brennan T."/>
            <person name="Carpenter J."/>
            <person name="Chen E."/>
            <person name="Cherry J.M."/>
            <person name="Chung E."/>
            <person name="Duncan M."/>
            <person name="Guzman E."/>
            <person name="Hartzell G."/>
            <person name="Hunicke-Smith S."/>
            <person name="Hyman R.W."/>
            <person name="Kayser A."/>
            <person name="Komp C."/>
            <person name="Lashkari D."/>
            <person name="Lew H."/>
            <person name="Lin D."/>
            <person name="Mosedale D."/>
            <person name="Nakahara K."/>
            <person name="Namath A."/>
            <person name="Norgren R."/>
            <person name="Oefner P."/>
            <person name="Oh C."/>
            <person name="Petel F.X."/>
            <person name="Roberts D."/>
            <person name="Sehl P."/>
            <person name="Schramm S."/>
            <person name="Shogren T."/>
            <person name="Smith V."/>
            <person name="Taylor P."/>
            <person name="Wei Y."/>
            <person name="Botstein D."/>
            <person name="Davis R.W."/>
        </authorList>
    </citation>
    <scope>NUCLEOTIDE SEQUENCE [LARGE SCALE GENOMIC DNA]</scope>
    <source>
        <strain>ATCC 204508 / S288c</strain>
    </source>
</reference>
<reference key="2">
    <citation type="journal article" date="2014" name="G3 (Bethesda)">
        <title>The reference genome sequence of Saccharomyces cerevisiae: Then and now.</title>
        <authorList>
            <person name="Engel S.R."/>
            <person name="Dietrich F.S."/>
            <person name="Fisk D.G."/>
            <person name="Binkley G."/>
            <person name="Balakrishnan R."/>
            <person name="Costanzo M.C."/>
            <person name="Dwight S.S."/>
            <person name="Hitz B.C."/>
            <person name="Karra K."/>
            <person name="Nash R.S."/>
            <person name="Weng S."/>
            <person name="Wong E.D."/>
            <person name="Lloyd P."/>
            <person name="Skrzypek M.S."/>
            <person name="Miyasato S.R."/>
            <person name="Simison M."/>
            <person name="Cherry J.M."/>
        </authorList>
    </citation>
    <scope>GENOME REANNOTATION</scope>
    <source>
        <strain>ATCC 204508 / S288c</strain>
    </source>
</reference>
<reference key="3">
    <citation type="journal article" date="2007" name="Genome Res.">
        <title>Approaching a complete repository of sequence-verified protein-encoding clones for Saccharomyces cerevisiae.</title>
        <authorList>
            <person name="Hu Y."/>
            <person name="Rolfs A."/>
            <person name="Bhullar B."/>
            <person name="Murthy T.V.S."/>
            <person name="Zhu C."/>
            <person name="Berger M.F."/>
            <person name="Camargo A.A."/>
            <person name="Kelley F."/>
            <person name="McCarron S."/>
            <person name="Jepson D."/>
            <person name="Richardson A."/>
            <person name="Raphael J."/>
            <person name="Moreira D."/>
            <person name="Taycher E."/>
            <person name="Zuo D."/>
            <person name="Mohr S."/>
            <person name="Kane M.F."/>
            <person name="Williamson J."/>
            <person name="Simpson A.J.G."/>
            <person name="Bulyk M.L."/>
            <person name="Harlow E."/>
            <person name="Marsischky G."/>
            <person name="Kolodner R.D."/>
            <person name="LaBaer J."/>
        </authorList>
    </citation>
    <scope>NUCLEOTIDE SEQUENCE [GENOMIC DNA]</scope>
    <source>
        <strain>ATCC 204508 / S288c</strain>
    </source>
</reference>
<reference key="4">
    <citation type="journal article" date="2003" name="Nature">
        <title>Global analysis of protein expression in yeast.</title>
        <authorList>
            <person name="Ghaemmaghami S."/>
            <person name="Huh W.-K."/>
            <person name="Bower K."/>
            <person name="Howson R.W."/>
            <person name="Belle A."/>
            <person name="Dephoure N."/>
            <person name="O'Shea E.K."/>
            <person name="Weissman J.S."/>
        </authorList>
    </citation>
    <scope>LEVEL OF PROTEIN EXPRESSION [LARGE SCALE ANALYSIS]</scope>
</reference>
<sequence length="338" mass="38174">MNSVKRVKLNSKMSKQICTHSGSFHADESLAVYMLRLLPEFKDAKLVRSRNPKDWEASDILVDVGAQYDGVKFFDHHQRGFFETFNEKYKTKLSSAGLIFKHYGRDIIKTILNNKVSSSDLDLLYDKVYKQFVEALDANDNGISKYTIPKDSNLEPNFRDNAISIPGIISGMNPNWNEDTSDESFDRCFARASEFIGGVFVTLVRGYGQSWLPAKALVAQAIDERMDVDKSGKIIVLPQFCPWKEHLYELEREKNIEKQIEFVLFTDSSGAWRVSTVPINSTSFQFRRGLPEPLRGLRDEELSTKSGVPGCIFIHAAGFIGGAKSKEAVYELAKMSLA</sequence>
<proteinExistence type="evidence at protein level"/>
<comment type="miscellaneous">
    <text evidence="1">Present with 6080 molecules/cell in log phase SD medium.</text>
</comment>
<comment type="similarity">
    <text evidence="2">Belongs to the MYG1 family.</text>
</comment>
<evidence type="ECO:0000269" key="1">
    <source>
    </source>
</evidence>
<evidence type="ECO:0000305" key="2"/>
<dbReference type="EMBL" id="U18917">
    <property type="protein sequence ID" value="AAB64683.1"/>
    <property type="molecule type" value="Genomic_DNA"/>
</dbReference>
<dbReference type="EMBL" id="AY557786">
    <property type="protein sequence ID" value="AAS56112.1"/>
    <property type="molecule type" value="Genomic_DNA"/>
</dbReference>
<dbReference type="EMBL" id="BK006939">
    <property type="protein sequence ID" value="DAA07817.1"/>
    <property type="molecule type" value="Genomic_DNA"/>
</dbReference>
<dbReference type="PIR" id="S50659">
    <property type="entry name" value="S50659"/>
</dbReference>
<dbReference type="BioGRID" id="36906">
    <property type="interactions" value="228"/>
</dbReference>
<dbReference type="DIP" id="DIP-4187N"/>
<dbReference type="FunCoup" id="P40093">
    <property type="interactions" value="1401"/>
</dbReference>
<dbReference type="IntAct" id="P40093">
    <property type="interactions" value="4"/>
</dbReference>
<dbReference type="MINT" id="P40093"/>
<dbReference type="STRING" id="4932.YER156C"/>
<dbReference type="iPTMnet" id="P40093"/>
<dbReference type="PaxDb" id="4932-YER156C"/>
<dbReference type="PeptideAtlas" id="P40093"/>
<dbReference type="EnsemblFungi" id="YER156C_mRNA">
    <property type="protein sequence ID" value="YER156C"/>
    <property type="gene ID" value="YER156C"/>
</dbReference>
<dbReference type="KEGG" id="sce:YER156C"/>
<dbReference type="AGR" id="SGD:S000000958"/>
<dbReference type="SGD" id="S000000958">
    <property type="gene designation" value="YER156C"/>
</dbReference>
<dbReference type="VEuPathDB" id="FungiDB:YER156C"/>
<dbReference type="eggNOG" id="KOG2948">
    <property type="taxonomic scope" value="Eukaryota"/>
</dbReference>
<dbReference type="GeneTree" id="ENSGT00390000010265"/>
<dbReference type="HOGENOM" id="CLU_051576_0_0_1"/>
<dbReference type="InParanoid" id="P40093"/>
<dbReference type="OMA" id="FHCDEVV"/>
<dbReference type="OrthoDB" id="10265310at2759"/>
<dbReference type="BioCyc" id="YEAST:G3O-30317-MONOMER"/>
<dbReference type="BioGRID-ORCS" id="856900">
    <property type="hits" value="2 hits in 10 CRISPR screens"/>
</dbReference>
<dbReference type="PRO" id="PR:P40093"/>
<dbReference type="Proteomes" id="UP000002311">
    <property type="component" value="Chromosome V"/>
</dbReference>
<dbReference type="RNAct" id="P40093">
    <property type="molecule type" value="protein"/>
</dbReference>
<dbReference type="GO" id="GO:0000785">
    <property type="term" value="C:chromatin"/>
    <property type="evidence" value="ECO:0000314"/>
    <property type="project" value="SGD"/>
</dbReference>
<dbReference type="GO" id="GO:0005737">
    <property type="term" value="C:cytoplasm"/>
    <property type="evidence" value="ECO:0007005"/>
    <property type="project" value="SGD"/>
</dbReference>
<dbReference type="GO" id="GO:0005634">
    <property type="term" value="C:nucleus"/>
    <property type="evidence" value="ECO:0000314"/>
    <property type="project" value="SGD"/>
</dbReference>
<dbReference type="GO" id="GO:1901857">
    <property type="term" value="P:positive regulation of cellular respiration"/>
    <property type="evidence" value="ECO:0000315"/>
    <property type="project" value="SGD"/>
</dbReference>
<dbReference type="InterPro" id="IPR003226">
    <property type="entry name" value="MYG1_exonuclease"/>
</dbReference>
<dbReference type="PANTHER" id="PTHR11215">
    <property type="entry name" value="METAL DEPENDENT HYDROLASE - RELATED"/>
    <property type="match status" value="1"/>
</dbReference>
<dbReference type="PANTHER" id="PTHR11215:SF1">
    <property type="entry name" value="MYG1 EXONUCLEASE"/>
    <property type="match status" value="1"/>
</dbReference>
<dbReference type="Pfam" id="PF03690">
    <property type="entry name" value="MYG1_exonuc"/>
    <property type="match status" value="1"/>
</dbReference>
<name>YEY6_YEAST</name>
<feature type="chain" id="PRO_0000213487" description="MYG1 protein YER156C">
    <location>
        <begin position="1"/>
        <end position="338"/>
    </location>
</feature>
<accession>P40093</accession>
<accession>D3DM63</accession>
<organism>
    <name type="scientific">Saccharomyces cerevisiae (strain ATCC 204508 / S288c)</name>
    <name type="common">Baker's yeast</name>
    <dbReference type="NCBI Taxonomy" id="559292"/>
    <lineage>
        <taxon>Eukaryota</taxon>
        <taxon>Fungi</taxon>
        <taxon>Dikarya</taxon>
        <taxon>Ascomycota</taxon>
        <taxon>Saccharomycotina</taxon>
        <taxon>Saccharomycetes</taxon>
        <taxon>Saccharomycetales</taxon>
        <taxon>Saccharomycetaceae</taxon>
        <taxon>Saccharomyces</taxon>
    </lineage>
</organism>